<dbReference type="EMBL" id="CP000552">
    <property type="protein sequence ID" value="ABM71234.1"/>
    <property type="molecule type" value="Genomic_DNA"/>
</dbReference>
<dbReference type="RefSeq" id="WP_011819351.1">
    <property type="nucleotide sequence ID" value="NC_008817.1"/>
</dbReference>
<dbReference type="SMR" id="A2BTX3"/>
<dbReference type="STRING" id="167542.P9515_00251"/>
<dbReference type="GeneID" id="60201404"/>
<dbReference type="KEGG" id="pmc:P9515_00251"/>
<dbReference type="eggNOG" id="COG0231">
    <property type="taxonomic scope" value="Bacteria"/>
</dbReference>
<dbReference type="HOGENOM" id="CLU_074944_0_1_3"/>
<dbReference type="OrthoDB" id="9801844at2"/>
<dbReference type="UniPathway" id="UPA00345"/>
<dbReference type="Proteomes" id="UP000001589">
    <property type="component" value="Chromosome"/>
</dbReference>
<dbReference type="GO" id="GO:0005737">
    <property type="term" value="C:cytoplasm"/>
    <property type="evidence" value="ECO:0007669"/>
    <property type="project" value="UniProtKB-SubCell"/>
</dbReference>
<dbReference type="GO" id="GO:0003746">
    <property type="term" value="F:translation elongation factor activity"/>
    <property type="evidence" value="ECO:0007669"/>
    <property type="project" value="UniProtKB-UniRule"/>
</dbReference>
<dbReference type="GO" id="GO:0043043">
    <property type="term" value="P:peptide biosynthetic process"/>
    <property type="evidence" value="ECO:0007669"/>
    <property type="project" value="InterPro"/>
</dbReference>
<dbReference type="CDD" id="cd04470">
    <property type="entry name" value="S1_EF-P_repeat_1"/>
    <property type="match status" value="1"/>
</dbReference>
<dbReference type="CDD" id="cd05794">
    <property type="entry name" value="S1_EF-P_repeat_2"/>
    <property type="match status" value="1"/>
</dbReference>
<dbReference type="FunFam" id="2.30.30.30:FF:000003">
    <property type="entry name" value="Elongation factor P"/>
    <property type="match status" value="1"/>
</dbReference>
<dbReference type="FunFam" id="2.40.50.140:FF:000004">
    <property type="entry name" value="Elongation factor P"/>
    <property type="match status" value="1"/>
</dbReference>
<dbReference type="FunFam" id="2.40.50.140:FF:000009">
    <property type="entry name" value="Elongation factor P"/>
    <property type="match status" value="1"/>
</dbReference>
<dbReference type="Gene3D" id="2.30.30.30">
    <property type="match status" value="1"/>
</dbReference>
<dbReference type="Gene3D" id="2.40.50.140">
    <property type="entry name" value="Nucleic acid-binding proteins"/>
    <property type="match status" value="2"/>
</dbReference>
<dbReference type="HAMAP" id="MF_00141">
    <property type="entry name" value="EF_P"/>
    <property type="match status" value="1"/>
</dbReference>
<dbReference type="InterPro" id="IPR015365">
    <property type="entry name" value="Elong-fact-P_C"/>
</dbReference>
<dbReference type="InterPro" id="IPR012340">
    <property type="entry name" value="NA-bd_OB-fold"/>
</dbReference>
<dbReference type="InterPro" id="IPR014722">
    <property type="entry name" value="Rib_uL2_dom2"/>
</dbReference>
<dbReference type="InterPro" id="IPR020599">
    <property type="entry name" value="Transl_elong_fac_P/YeiP"/>
</dbReference>
<dbReference type="InterPro" id="IPR013185">
    <property type="entry name" value="Transl_elong_KOW-like"/>
</dbReference>
<dbReference type="InterPro" id="IPR001059">
    <property type="entry name" value="Transl_elong_P/YeiP_cen"/>
</dbReference>
<dbReference type="InterPro" id="IPR013852">
    <property type="entry name" value="Transl_elong_P/YeiP_CS"/>
</dbReference>
<dbReference type="InterPro" id="IPR011768">
    <property type="entry name" value="Transl_elongation_fac_P"/>
</dbReference>
<dbReference type="InterPro" id="IPR008991">
    <property type="entry name" value="Translation_prot_SH3-like_sf"/>
</dbReference>
<dbReference type="NCBIfam" id="TIGR00038">
    <property type="entry name" value="efp"/>
    <property type="match status" value="1"/>
</dbReference>
<dbReference type="NCBIfam" id="NF001810">
    <property type="entry name" value="PRK00529.1"/>
    <property type="match status" value="1"/>
</dbReference>
<dbReference type="PANTHER" id="PTHR30053">
    <property type="entry name" value="ELONGATION FACTOR P"/>
    <property type="match status" value="1"/>
</dbReference>
<dbReference type="PANTHER" id="PTHR30053:SF12">
    <property type="entry name" value="ELONGATION FACTOR P (EF-P) FAMILY PROTEIN"/>
    <property type="match status" value="1"/>
</dbReference>
<dbReference type="Pfam" id="PF01132">
    <property type="entry name" value="EFP"/>
    <property type="match status" value="1"/>
</dbReference>
<dbReference type="Pfam" id="PF08207">
    <property type="entry name" value="EFP_N"/>
    <property type="match status" value="1"/>
</dbReference>
<dbReference type="Pfam" id="PF09285">
    <property type="entry name" value="Elong-fact-P_C"/>
    <property type="match status" value="1"/>
</dbReference>
<dbReference type="PIRSF" id="PIRSF005901">
    <property type="entry name" value="EF-P"/>
    <property type="match status" value="1"/>
</dbReference>
<dbReference type="SMART" id="SM01185">
    <property type="entry name" value="EFP"/>
    <property type="match status" value="1"/>
</dbReference>
<dbReference type="SMART" id="SM00841">
    <property type="entry name" value="Elong-fact-P_C"/>
    <property type="match status" value="1"/>
</dbReference>
<dbReference type="SUPFAM" id="SSF50249">
    <property type="entry name" value="Nucleic acid-binding proteins"/>
    <property type="match status" value="2"/>
</dbReference>
<dbReference type="SUPFAM" id="SSF50104">
    <property type="entry name" value="Translation proteins SH3-like domain"/>
    <property type="match status" value="1"/>
</dbReference>
<dbReference type="PROSITE" id="PS01275">
    <property type="entry name" value="EFP"/>
    <property type="match status" value="1"/>
</dbReference>
<gene>
    <name evidence="1" type="primary">efp</name>
    <name type="ordered locus">P9515_00251</name>
</gene>
<keyword id="KW-0963">Cytoplasm</keyword>
<keyword id="KW-0251">Elongation factor</keyword>
<keyword id="KW-0648">Protein biosynthesis</keyword>
<protein>
    <recommendedName>
        <fullName evidence="1">Elongation factor P</fullName>
        <shortName evidence="1">EF-P</shortName>
    </recommendedName>
</protein>
<organism>
    <name type="scientific">Prochlorococcus marinus (strain MIT 9515)</name>
    <dbReference type="NCBI Taxonomy" id="167542"/>
    <lineage>
        <taxon>Bacteria</taxon>
        <taxon>Bacillati</taxon>
        <taxon>Cyanobacteriota</taxon>
        <taxon>Cyanophyceae</taxon>
        <taxon>Synechococcales</taxon>
        <taxon>Prochlorococcaceae</taxon>
        <taxon>Prochlorococcus</taxon>
    </lineage>
</organism>
<comment type="function">
    <text evidence="1">Involved in peptide bond synthesis. Stimulates efficient translation and peptide-bond synthesis on native or reconstituted 70S ribosomes in vitro. Probably functions indirectly by altering the affinity of the ribosome for aminoacyl-tRNA, thus increasing their reactivity as acceptors for peptidyl transferase.</text>
</comment>
<comment type="pathway">
    <text evidence="1">Protein biosynthesis; polypeptide chain elongation.</text>
</comment>
<comment type="subcellular location">
    <subcellularLocation>
        <location evidence="1">Cytoplasm</location>
    </subcellularLocation>
</comment>
<comment type="similarity">
    <text evidence="1">Belongs to the elongation factor P family.</text>
</comment>
<reference key="1">
    <citation type="journal article" date="2007" name="PLoS Genet.">
        <title>Patterns and implications of gene gain and loss in the evolution of Prochlorococcus.</title>
        <authorList>
            <person name="Kettler G.C."/>
            <person name="Martiny A.C."/>
            <person name="Huang K."/>
            <person name="Zucker J."/>
            <person name="Coleman M.L."/>
            <person name="Rodrigue S."/>
            <person name="Chen F."/>
            <person name="Lapidus A."/>
            <person name="Ferriera S."/>
            <person name="Johnson J."/>
            <person name="Steglich C."/>
            <person name="Church G.M."/>
            <person name="Richardson P."/>
            <person name="Chisholm S.W."/>
        </authorList>
    </citation>
    <scope>NUCLEOTIDE SEQUENCE [LARGE SCALE GENOMIC DNA]</scope>
    <source>
        <strain>MIT 9515</strain>
    </source>
</reference>
<name>EFP_PROM5</name>
<proteinExistence type="inferred from homology"/>
<feature type="chain" id="PRO_1000010806" description="Elongation factor P">
    <location>
        <begin position="1"/>
        <end position="186"/>
    </location>
</feature>
<accession>A2BTX3</accession>
<sequence>MISSNDFRTGTTIEIDGQVWRVVEFLHVKPGKGSAFVRTKLKSVRNGNVVEKTFRAGESVQQAVLEKSNLQHTYVESGDYVFMDMTSFEETRLSSDQIGRGSKYLKEGMEVNVIFYKDKVLEVELPISITLKVTETDPGVKGDTASGGTKPAILETGAQVMVPLFISVGEMIKVDTRNDSYLGREN</sequence>
<evidence type="ECO:0000255" key="1">
    <source>
        <dbReference type="HAMAP-Rule" id="MF_00141"/>
    </source>
</evidence>